<sequence>MFQGSSALTLDAKGRISIPTRHRDALMDRAEGRLTLTRHPDGCLLVYPRPEWEEKRAQIAAFPMSARALQRLLLGNAQDVDIDGSGRVLIAPELRNASGMTRDVMLLGMGAHFELWDAASLARREAEDLAQGMPDVLNQFSF</sequence>
<feature type="chain" id="PRO_0000108463" description="Transcriptional regulator MraZ">
    <location>
        <begin position="1"/>
        <end position="142"/>
    </location>
</feature>
<feature type="domain" description="SpoVT-AbrB 1" evidence="2">
    <location>
        <begin position="5"/>
        <end position="51"/>
    </location>
</feature>
<feature type="domain" description="SpoVT-AbrB 2" evidence="2">
    <location>
        <begin position="77"/>
        <end position="120"/>
    </location>
</feature>
<evidence type="ECO:0000255" key="1">
    <source>
        <dbReference type="HAMAP-Rule" id="MF_01008"/>
    </source>
</evidence>
<evidence type="ECO:0000255" key="2">
    <source>
        <dbReference type="PROSITE-ProRule" id="PRU01076"/>
    </source>
</evidence>
<evidence type="ECO:0000305" key="3"/>
<organism>
    <name type="scientific">Bordetella parapertussis (strain 12822 / ATCC BAA-587 / NCTC 13253)</name>
    <dbReference type="NCBI Taxonomy" id="257311"/>
    <lineage>
        <taxon>Bacteria</taxon>
        <taxon>Pseudomonadati</taxon>
        <taxon>Pseudomonadota</taxon>
        <taxon>Betaproteobacteria</taxon>
        <taxon>Burkholderiales</taxon>
        <taxon>Alcaligenaceae</taxon>
        <taxon>Bordetella</taxon>
    </lineage>
</organism>
<dbReference type="EMBL" id="BX640434">
    <property type="protein sequence ID" value="CAE39043.1"/>
    <property type="status" value="ALT_INIT"/>
    <property type="molecule type" value="Genomic_DNA"/>
</dbReference>
<dbReference type="RefSeq" id="WP_010931263.1">
    <property type="nucleotide sequence ID" value="NC_002928.3"/>
</dbReference>
<dbReference type="SMR" id="Q7W4A6"/>
<dbReference type="GeneID" id="93205549"/>
<dbReference type="KEGG" id="bpa:BPP3760"/>
<dbReference type="HOGENOM" id="CLU_107907_2_1_4"/>
<dbReference type="Proteomes" id="UP000001421">
    <property type="component" value="Chromosome"/>
</dbReference>
<dbReference type="GO" id="GO:0005737">
    <property type="term" value="C:cytoplasm"/>
    <property type="evidence" value="ECO:0007669"/>
    <property type="project" value="UniProtKB-UniRule"/>
</dbReference>
<dbReference type="GO" id="GO:0009295">
    <property type="term" value="C:nucleoid"/>
    <property type="evidence" value="ECO:0007669"/>
    <property type="project" value="UniProtKB-SubCell"/>
</dbReference>
<dbReference type="GO" id="GO:0003700">
    <property type="term" value="F:DNA-binding transcription factor activity"/>
    <property type="evidence" value="ECO:0007669"/>
    <property type="project" value="UniProtKB-UniRule"/>
</dbReference>
<dbReference type="GO" id="GO:0000976">
    <property type="term" value="F:transcription cis-regulatory region binding"/>
    <property type="evidence" value="ECO:0007669"/>
    <property type="project" value="TreeGrafter"/>
</dbReference>
<dbReference type="GO" id="GO:2000143">
    <property type="term" value="P:negative regulation of DNA-templated transcription initiation"/>
    <property type="evidence" value="ECO:0007669"/>
    <property type="project" value="TreeGrafter"/>
</dbReference>
<dbReference type="CDD" id="cd16321">
    <property type="entry name" value="MraZ_C"/>
    <property type="match status" value="1"/>
</dbReference>
<dbReference type="CDD" id="cd16320">
    <property type="entry name" value="MraZ_N"/>
    <property type="match status" value="1"/>
</dbReference>
<dbReference type="Gene3D" id="3.40.1550.20">
    <property type="entry name" value="Transcriptional regulator MraZ domain"/>
    <property type="match status" value="1"/>
</dbReference>
<dbReference type="HAMAP" id="MF_01008">
    <property type="entry name" value="MraZ"/>
    <property type="match status" value="1"/>
</dbReference>
<dbReference type="InterPro" id="IPR003444">
    <property type="entry name" value="MraZ"/>
</dbReference>
<dbReference type="InterPro" id="IPR035644">
    <property type="entry name" value="MraZ_C"/>
</dbReference>
<dbReference type="InterPro" id="IPR020603">
    <property type="entry name" value="MraZ_dom"/>
</dbReference>
<dbReference type="InterPro" id="IPR035642">
    <property type="entry name" value="MraZ_N"/>
</dbReference>
<dbReference type="InterPro" id="IPR038619">
    <property type="entry name" value="MraZ_sf"/>
</dbReference>
<dbReference type="InterPro" id="IPR007159">
    <property type="entry name" value="SpoVT-AbrB_dom"/>
</dbReference>
<dbReference type="InterPro" id="IPR037914">
    <property type="entry name" value="SpoVT-AbrB_sf"/>
</dbReference>
<dbReference type="NCBIfam" id="TIGR00242">
    <property type="entry name" value="division/cell wall cluster transcriptional repressor MraZ"/>
    <property type="match status" value="1"/>
</dbReference>
<dbReference type="PANTHER" id="PTHR34701">
    <property type="entry name" value="TRANSCRIPTIONAL REGULATOR MRAZ"/>
    <property type="match status" value="1"/>
</dbReference>
<dbReference type="PANTHER" id="PTHR34701:SF1">
    <property type="entry name" value="TRANSCRIPTIONAL REGULATOR MRAZ"/>
    <property type="match status" value="1"/>
</dbReference>
<dbReference type="Pfam" id="PF02381">
    <property type="entry name" value="MraZ"/>
    <property type="match status" value="2"/>
</dbReference>
<dbReference type="SUPFAM" id="SSF89447">
    <property type="entry name" value="AbrB/MazE/MraZ-like"/>
    <property type="match status" value="1"/>
</dbReference>
<dbReference type="PROSITE" id="PS51740">
    <property type="entry name" value="SPOVT_ABRB"/>
    <property type="match status" value="2"/>
</dbReference>
<keyword id="KW-0963">Cytoplasm</keyword>
<keyword id="KW-0238">DNA-binding</keyword>
<keyword id="KW-0677">Repeat</keyword>
<keyword id="KW-0804">Transcription</keyword>
<keyword id="KW-0805">Transcription regulation</keyword>
<protein>
    <recommendedName>
        <fullName>Transcriptional regulator MraZ</fullName>
    </recommendedName>
</protein>
<reference key="1">
    <citation type="journal article" date="2003" name="Nat. Genet.">
        <title>Comparative analysis of the genome sequences of Bordetella pertussis, Bordetella parapertussis and Bordetella bronchiseptica.</title>
        <authorList>
            <person name="Parkhill J."/>
            <person name="Sebaihia M."/>
            <person name="Preston A."/>
            <person name="Murphy L.D."/>
            <person name="Thomson N.R."/>
            <person name="Harris D.E."/>
            <person name="Holden M.T.G."/>
            <person name="Churcher C.M."/>
            <person name="Bentley S.D."/>
            <person name="Mungall K.L."/>
            <person name="Cerdeno-Tarraga A.-M."/>
            <person name="Temple L."/>
            <person name="James K.D."/>
            <person name="Harris B."/>
            <person name="Quail M.A."/>
            <person name="Achtman M."/>
            <person name="Atkin R."/>
            <person name="Baker S."/>
            <person name="Basham D."/>
            <person name="Bason N."/>
            <person name="Cherevach I."/>
            <person name="Chillingworth T."/>
            <person name="Collins M."/>
            <person name="Cronin A."/>
            <person name="Davis P."/>
            <person name="Doggett J."/>
            <person name="Feltwell T."/>
            <person name="Goble A."/>
            <person name="Hamlin N."/>
            <person name="Hauser H."/>
            <person name="Holroyd S."/>
            <person name="Jagels K."/>
            <person name="Leather S."/>
            <person name="Moule S."/>
            <person name="Norberczak H."/>
            <person name="O'Neil S."/>
            <person name="Ormond D."/>
            <person name="Price C."/>
            <person name="Rabbinowitsch E."/>
            <person name="Rutter S."/>
            <person name="Sanders M."/>
            <person name="Saunders D."/>
            <person name="Seeger K."/>
            <person name="Sharp S."/>
            <person name="Simmonds M."/>
            <person name="Skelton J."/>
            <person name="Squares R."/>
            <person name="Squares S."/>
            <person name="Stevens K."/>
            <person name="Unwin L."/>
            <person name="Whitehead S."/>
            <person name="Barrell B.G."/>
            <person name="Maskell D.J."/>
        </authorList>
    </citation>
    <scope>NUCLEOTIDE SEQUENCE [LARGE SCALE GENOMIC DNA]</scope>
    <source>
        <strain>12822 / ATCC BAA-587 / NCTC 13253</strain>
    </source>
</reference>
<proteinExistence type="inferred from homology"/>
<accession>Q7W4A6</accession>
<comment type="subunit">
    <text evidence="1">Forms oligomers.</text>
</comment>
<comment type="subcellular location">
    <subcellularLocation>
        <location evidence="1">Cytoplasm</location>
        <location evidence="1">Nucleoid</location>
    </subcellularLocation>
</comment>
<comment type="similarity">
    <text evidence="1">Belongs to the MraZ family.</text>
</comment>
<comment type="sequence caution" evidence="3">
    <conflict type="erroneous initiation">
        <sequence resource="EMBL-CDS" id="CAE39043"/>
    </conflict>
</comment>
<gene>
    <name evidence="1" type="primary">mraZ</name>
    <name type="ordered locus">BPP3760</name>
</gene>
<name>MRAZ_BORPA</name>